<sequence length="405" mass="42331">MAVGLGPLPALHPVPGFELGISSAGIKRPGRKDVVVMRCAEGSSVAGVFTLNAFCAAPVILAKQRVQGTVRYLLTNTGNANAGTGEPGLAAARRTCEKLAQLTGVDASAVLPYSTGVIGEPLPVEKIEGALQAAIDDLSVDNWAAAATGIMTTDTLPKGTSRQFSHDGVTVTVTGISKGAGMIRPNMATMLGYIATDAKVAQSVLQDLIRDGANKSFNRITIDGDTSTNDCCMLIATGQADLPEITEAKGPLFEALKKAVFDVCMEVAQAIVRDGEGATKFVTVEVNGGGNHQECLDVGYAVAHSPLIKTALFASDPNWGRILAAVGRAGVPDLDVSKIDVFLGGVCIASQGCRATTYTEEQGSAVMAEEEITIRIELGRGDCSETIWTTDLSHEYVKINAEYRT</sequence>
<name>ARGJ_PSEU2</name>
<protein>
    <recommendedName>
        <fullName evidence="1">Arginine biosynthesis bifunctional protein ArgJ</fullName>
    </recommendedName>
    <domain>
        <recommendedName>
            <fullName evidence="1">Glutamate N-acetyltransferase</fullName>
            <ecNumber evidence="1">2.3.1.35</ecNumber>
        </recommendedName>
        <alternativeName>
            <fullName evidence="1">Ornithine acetyltransferase</fullName>
            <shortName evidence="1">OATase</shortName>
        </alternativeName>
        <alternativeName>
            <fullName evidence="1">Ornithine transacetylase</fullName>
        </alternativeName>
    </domain>
    <domain>
        <recommendedName>
            <fullName evidence="1">Amino-acid acetyltransferase</fullName>
            <ecNumber evidence="1">2.3.1.1</ecNumber>
        </recommendedName>
        <alternativeName>
            <fullName evidence="1">N-acetylglutamate synthase</fullName>
            <shortName evidence="1">AGSase</shortName>
        </alternativeName>
    </domain>
    <component>
        <recommendedName>
            <fullName evidence="1">Arginine biosynthesis bifunctional protein ArgJ alpha chain</fullName>
        </recommendedName>
    </component>
    <component>
        <recommendedName>
            <fullName evidence="1">Arginine biosynthesis bifunctional protein ArgJ beta chain</fullName>
        </recommendedName>
    </component>
</protein>
<gene>
    <name evidence="1" type="primary">argJ</name>
    <name type="ordered locus">Psyr_4093</name>
</gene>
<accession>Q4ZNZ9</accession>
<keyword id="KW-0012">Acyltransferase</keyword>
<keyword id="KW-0028">Amino-acid biosynthesis</keyword>
<keyword id="KW-0055">Arginine biosynthesis</keyword>
<keyword id="KW-0068">Autocatalytic cleavage</keyword>
<keyword id="KW-0963">Cytoplasm</keyword>
<keyword id="KW-0511">Multifunctional enzyme</keyword>
<keyword id="KW-0808">Transferase</keyword>
<dbReference type="EC" id="2.3.1.35" evidence="1"/>
<dbReference type="EC" id="2.3.1.1" evidence="1"/>
<dbReference type="EMBL" id="CP000075">
    <property type="protein sequence ID" value="AAY39123.1"/>
    <property type="molecule type" value="Genomic_DNA"/>
</dbReference>
<dbReference type="RefSeq" id="WP_011268841.1">
    <property type="nucleotide sequence ID" value="NC_007005.1"/>
</dbReference>
<dbReference type="RefSeq" id="YP_237161.1">
    <property type="nucleotide sequence ID" value="NC_007005.1"/>
</dbReference>
<dbReference type="SMR" id="Q4ZNZ9"/>
<dbReference type="STRING" id="205918.Psyr_4093"/>
<dbReference type="MEROPS" id="T05.001"/>
<dbReference type="KEGG" id="psb:Psyr_4093"/>
<dbReference type="PATRIC" id="fig|205918.7.peg.4211"/>
<dbReference type="eggNOG" id="COG1364">
    <property type="taxonomic scope" value="Bacteria"/>
</dbReference>
<dbReference type="HOGENOM" id="CLU_027172_1_0_6"/>
<dbReference type="OrthoDB" id="9804242at2"/>
<dbReference type="UniPathway" id="UPA00068">
    <property type="reaction ID" value="UER00106"/>
</dbReference>
<dbReference type="UniPathway" id="UPA00068">
    <property type="reaction ID" value="UER00111"/>
</dbReference>
<dbReference type="Proteomes" id="UP000000426">
    <property type="component" value="Chromosome"/>
</dbReference>
<dbReference type="GO" id="GO:0005737">
    <property type="term" value="C:cytoplasm"/>
    <property type="evidence" value="ECO:0007669"/>
    <property type="project" value="UniProtKB-SubCell"/>
</dbReference>
<dbReference type="GO" id="GO:0004358">
    <property type="term" value="F:glutamate N-acetyltransferase activity"/>
    <property type="evidence" value="ECO:0007669"/>
    <property type="project" value="UniProtKB-UniRule"/>
</dbReference>
<dbReference type="GO" id="GO:0004042">
    <property type="term" value="F:L-glutamate N-acetyltransferase activity"/>
    <property type="evidence" value="ECO:0007669"/>
    <property type="project" value="UniProtKB-UniRule"/>
</dbReference>
<dbReference type="GO" id="GO:0006526">
    <property type="term" value="P:L-arginine biosynthetic process"/>
    <property type="evidence" value="ECO:0007669"/>
    <property type="project" value="UniProtKB-UniRule"/>
</dbReference>
<dbReference type="GO" id="GO:0006592">
    <property type="term" value="P:ornithine biosynthetic process"/>
    <property type="evidence" value="ECO:0007669"/>
    <property type="project" value="TreeGrafter"/>
</dbReference>
<dbReference type="CDD" id="cd02152">
    <property type="entry name" value="OAT"/>
    <property type="match status" value="1"/>
</dbReference>
<dbReference type="FunFam" id="3.10.20.340:FF:000001">
    <property type="entry name" value="Arginine biosynthesis bifunctional protein ArgJ, chloroplastic"/>
    <property type="match status" value="1"/>
</dbReference>
<dbReference type="FunFam" id="3.60.70.12:FF:000001">
    <property type="entry name" value="Arginine biosynthesis bifunctional protein ArgJ, chloroplastic"/>
    <property type="match status" value="1"/>
</dbReference>
<dbReference type="Gene3D" id="3.10.20.340">
    <property type="entry name" value="ArgJ beta chain, C-terminal domain"/>
    <property type="match status" value="1"/>
</dbReference>
<dbReference type="Gene3D" id="3.60.70.12">
    <property type="entry name" value="L-amino peptidase D-ALA esterase/amidase"/>
    <property type="match status" value="1"/>
</dbReference>
<dbReference type="HAMAP" id="MF_01106">
    <property type="entry name" value="ArgJ"/>
    <property type="match status" value="1"/>
</dbReference>
<dbReference type="InterPro" id="IPR002813">
    <property type="entry name" value="Arg_biosynth_ArgJ"/>
</dbReference>
<dbReference type="InterPro" id="IPR016117">
    <property type="entry name" value="ArgJ-like_dom_sf"/>
</dbReference>
<dbReference type="InterPro" id="IPR042195">
    <property type="entry name" value="ArgJ_beta_C"/>
</dbReference>
<dbReference type="NCBIfam" id="TIGR00120">
    <property type="entry name" value="ArgJ"/>
    <property type="match status" value="1"/>
</dbReference>
<dbReference type="NCBIfam" id="NF003802">
    <property type="entry name" value="PRK05388.1"/>
    <property type="match status" value="1"/>
</dbReference>
<dbReference type="PANTHER" id="PTHR23100">
    <property type="entry name" value="ARGININE BIOSYNTHESIS BIFUNCTIONAL PROTEIN ARGJ"/>
    <property type="match status" value="1"/>
</dbReference>
<dbReference type="PANTHER" id="PTHR23100:SF0">
    <property type="entry name" value="ARGININE BIOSYNTHESIS BIFUNCTIONAL PROTEIN ARGJ, MITOCHONDRIAL"/>
    <property type="match status" value="1"/>
</dbReference>
<dbReference type="Pfam" id="PF01960">
    <property type="entry name" value="ArgJ"/>
    <property type="match status" value="1"/>
</dbReference>
<dbReference type="SUPFAM" id="SSF56266">
    <property type="entry name" value="DmpA/ArgJ-like"/>
    <property type="match status" value="1"/>
</dbReference>
<comment type="function">
    <text evidence="1">Catalyzes two activities which are involved in the cyclic version of arginine biosynthesis: the synthesis of N-acetylglutamate from glutamate and acetyl-CoA as the acetyl donor, and of ornithine by transacetylation between N(2)-acetylornithine and glutamate.</text>
</comment>
<comment type="catalytic activity">
    <reaction evidence="1">
        <text>N(2)-acetyl-L-ornithine + L-glutamate = N-acetyl-L-glutamate + L-ornithine</text>
        <dbReference type="Rhea" id="RHEA:15349"/>
        <dbReference type="ChEBI" id="CHEBI:29985"/>
        <dbReference type="ChEBI" id="CHEBI:44337"/>
        <dbReference type="ChEBI" id="CHEBI:46911"/>
        <dbReference type="ChEBI" id="CHEBI:57805"/>
        <dbReference type="EC" id="2.3.1.35"/>
    </reaction>
</comment>
<comment type="catalytic activity">
    <reaction evidence="1">
        <text>L-glutamate + acetyl-CoA = N-acetyl-L-glutamate + CoA + H(+)</text>
        <dbReference type="Rhea" id="RHEA:24292"/>
        <dbReference type="ChEBI" id="CHEBI:15378"/>
        <dbReference type="ChEBI" id="CHEBI:29985"/>
        <dbReference type="ChEBI" id="CHEBI:44337"/>
        <dbReference type="ChEBI" id="CHEBI:57287"/>
        <dbReference type="ChEBI" id="CHEBI:57288"/>
        <dbReference type="EC" id="2.3.1.1"/>
    </reaction>
</comment>
<comment type="pathway">
    <text evidence="1">Amino-acid biosynthesis; L-arginine biosynthesis; L-ornithine and N-acetyl-L-glutamate from L-glutamate and N(2)-acetyl-L-ornithine (cyclic): step 1/1.</text>
</comment>
<comment type="pathway">
    <text evidence="1">Amino-acid biosynthesis; L-arginine biosynthesis; N(2)-acetyl-L-ornithine from L-glutamate: step 1/4.</text>
</comment>
<comment type="subunit">
    <text evidence="1">Heterotetramer of two alpha and two beta chains.</text>
</comment>
<comment type="subcellular location">
    <subcellularLocation>
        <location evidence="1">Cytoplasm</location>
    </subcellularLocation>
</comment>
<comment type="similarity">
    <text evidence="1">Belongs to the ArgJ family.</text>
</comment>
<evidence type="ECO:0000255" key="1">
    <source>
        <dbReference type="HAMAP-Rule" id="MF_01106"/>
    </source>
</evidence>
<organism>
    <name type="scientific">Pseudomonas syringae pv. syringae (strain B728a)</name>
    <dbReference type="NCBI Taxonomy" id="205918"/>
    <lineage>
        <taxon>Bacteria</taxon>
        <taxon>Pseudomonadati</taxon>
        <taxon>Pseudomonadota</taxon>
        <taxon>Gammaproteobacteria</taxon>
        <taxon>Pseudomonadales</taxon>
        <taxon>Pseudomonadaceae</taxon>
        <taxon>Pseudomonas</taxon>
        <taxon>Pseudomonas syringae</taxon>
    </lineage>
</organism>
<proteinExistence type="inferred from homology"/>
<reference key="1">
    <citation type="journal article" date="2005" name="Proc. Natl. Acad. Sci. U.S.A.">
        <title>Comparison of the complete genome sequences of Pseudomonas syringae pv. syringae B728a and pv. tomato DC3000.</title>
        <authorList>
            <person name="Feil H."/>
            <person name="Feil W.S."/>
            <person name="Chain P."/>
            <person name="Larimer F."/>
            <person name="Dibartolo G."/>
            <person name="Copeland A."/>
            <person name="Lykidis A."/>
            <person name="Trong S."/>
            <person name="Nolan M."/>
            <person name="Goltsman E."/>
            <person name="Thiel J."/>
            <person name="Malfatti S."/>
            <person name="Loper J.E."/>
            <person name="Lapidus A."/>
            <person name="Detter J.C."/>
            <person name="Land M."/>
            <person name="Richardson P.M."/>
            <person name="Kyrpides N.C."/>
            <person name="Ivanova N."/>
            <person name="Lindow S.E."/>
        </authorList>
    </citation>
    <scope>NUCLEOTIDE SEQUENCE [LARGE SCALE GENOMIC DNA]</scope>
    <source>
        <strain>B728a</strain>
    </source>
</reference>
<feature type="chain" id="PRO_0000227252" description="Arginine biosynthesis bifunctional protein ArgJ alpha chain" evidence="1">
    <location>
        <begin position="1"/>
        <end position="188"/>
    </location>
</feature>
<feature type="chain" id="PRO_0000227253" description="Arginine biosynthesis bifunctional protein ArgJ beta chain" evidence="1">
    <location>
        <begin position="189"/>
        <end position="405"/>
    </location>
</feature>
<feature type="active site" description="Nucleophile" evidence="1">
    <location>
        <position position="189"/>
    </location>
</feature>
<feature type="binding site" evidence="1">
    <location>
        <position position="152"/>
    </location>
    <ligand>
        <name>substrate</name>
    </ligand>
</feature>
<feature type="binding site" evidence="1">
    <location>
        <position position="178"/>
    </location>
    <ligand>
        <name>substrate</name>
    </ligand>
</feature>
<feature type="binding site" evidence="1">
    <location>
        <position position="189"/>
    </location>
    <ligand>
        <name>substrate</name>
    </ligand>
</feature>
<feature type="binding site" evidence="1">
    <location>
        <position position="276"/>
    </location>
    <ligand>
        <name>substrate</name>
    </ligand>
</feature>
<feature type="binding site" evidence="1">
    <location>
        <position position="400"/>
    </location>
    <ligand>
        <name>substrate</name>
    </ligand>
</feature>
<feature type="binding site" evidence="1">
    <location>
        <position position="405"/>
    </location>
    <ligand>
        <name>substrate</name>
    </ligand>
</feature>
<feature type="site" description="Involved in the stabilization of negative charge on the oxyanion by the formation of the oxyanion hole" evidence="1">
    <location>
        <position position="115"/>
    </location>
</feature>
<feature type="site" description="Involved in the stabilization of negative charge on the oxyanion by the formation of the oxyanion hole" evidence="1">
    <location>
        <position position="116"/>
    </location>
</feature>
<feature type="site" description="Cleavage; by autolysis" evidence="1">
    <location>
        <begin position="188"/>
        <end position="189"/>
    </location>
</feature>